<comment type="function">
    <text evidence="4 5">Lignin degradation and detoxification of lignin-derived products.</text>
</comment>
<comment type="catalytic activity">
    <reaction evidence="2">
        <text>4 hydroquinone + O2 = 4 benzosemiquinone + 2 H2O</text>
        <dbReference type="Rhea" id="RHEA:11276"/>
        <dbReference type="ChEBI" id="CHEBI:15377"/>
        <dbReference type="ChEBI" id="CHEBI:15379"/>
        <dbReference type="ChEBI" id="CHEBI:17594"/>
        <dbReference type="ChEBI" id="CHEBI:17977"/>
        <dbReference type="EC" id="1.10.3.2"/>
    </reaction>
</comment>
<comment type="cofactor">
    <cofactor evidence="2 3">
        <name>Cu cation</name>
        <dbReference type="ChEBI" id="CHEBI:23378"/>
    </cofactor>
    <text evidence="2 3">Binds 4 Cu cations per monomer.</text>
</comment>
<comment type="biophysicochemical properties">
    <absorption>
        <max evidence="2 3">280 nm</max>
        <text evidence="3">Exhibits a shoulder at 360 nm, a smaller absorption peak at 450 nm, and a second, larger peak at 590 nm.</text>
    </absorption>
    <phDependence>
        <text evidence="2 3">Optimum pH is 3.5 with 2,2'-azinobis-(3-ethylbenzthiazoline-6-sulphonate) as substrate, 5.0-7.5 with guiacol as substrate, and 6.0-7.0 with syringaldazine as substrate.</text>
    </phDependence>
    <temperatureDependence>
        <text evidence="2 3">Optimum temperature is 60-70 degrees Celsius.</text>
    </temperatureDependence>
</comment>
<comment type="subunit">
    <text evidence="3">Monomer.</text>
</comment>
<comment type="tissue specificity">
    <text evidence="2">Secreted protein; extracellular space.</text>
</comment>
<comment type="similarity">
    <text evidence="1">Belongs to the multicopper oxidase family.</text>
</comment>
<reference evidence="6" key="1">
    <citation type="journal article" date="2004" name="Appl. Environ. Microbiol.">
        <title>Molecular cloning and expression in Saccharomyces cerevisiae of a laccase gene from the ascomycete Melanocarpus albomyces.</title>
        <authorList>
            <person name="Kiiskinen L.-L."/>
            <person name="Saloheimo M."/>
        </authorList>
    </citation>
    <scope>NUCLEOTIDE SEQUENCE [GENOMIC DNA]</scope>
</reference>
<reference evidence="5" key="2">
    <citation type="journal article" date="2002" name="Appl. Microbiol. Biotechnol.">
        <title>Purification and characterisation of a novel laccase from the ascomycete Melanocarpus albomyces.</title>
        <authorList>
            <person name="Kiiskinen L.-L."/>
            <person name="Viikari L."/>
            <person name="Kruus K."/>
        </authorList>
    </citation>
    <scope>PROTEIN SEQUENCE OF 51-78; 214-228 AND 507-517</scope>
    <scope>CATALYTIC ACTIVITY</scope>
    <scope>COFACTOR</scope>
    <scope>BIOPHYSICOCHEMICAL PROPERTIES</scope>
    <scope>TISSUE SPECIFICITY</scope>
    <source>
        <strain evidence="2">VTT D-96490</strain>
    </source>
</reference>
<reference evidence="5" key="3">
    <citation type="journal article" date="2004" name="FEBS Lett.">
        <title>Laccase from Melanocarpus albomyces binds effectively to cellulose.</title>
        <authorList>
            <person name="Kiiskinen L.-L."/>
            <person name="Palonen H."/>
            <person name="Linder M."/>
            <person name="Viikari L."/>
            <person name="Kruus K."/>
        </authorList>
    </citation>
    <scope>PROBABLE FUNCTION</scope>
</reference>
<reference evidence="5 6" key="4">
    <citation type="journal article" date="2002" name="Nat. Struct. Biol.">
        <title>Crystal structure of a laccase from Melanocarpus albomyces with an intact trinuclear copper site.</title>
        <authorList>
            <person name="Hakulinen N."/>
            <person name="Kiiskinen L.-L."/>
            <person name="Kruus K."/>
            <person name="Saloheimo M."/>
            <person name="Paananen A."/>
            <person name="Koivula A."/>
            <person name="Rouvinen J."/>
        </authorList>
    </citation>
    <scope>X-RAY CRYSTALLOGRAPHY (2.4 ANGSTROMS) OF 51-609 IN COMPLEX WITH COFACTOR AND OXYGEN</scope>
    <scope>BIOPHYSICOCHEMICAL PROPERTIES</scope>
    <scope>SUBUNIT</scope>
    <scope>GLYCOSYLATION AT ASN-89; ASN-138; ASN-251; ASN-266; ASN-294; ASN-339; ASN-426 AND ASN-446</scope>
    <scope>DISULFIDE BONDS</scope>
</reference>
<gene>
    <name type="primary">LAC1</name>
</gene>
<organism>
    <name type="scientific">Melanocarpus albomyces</name>
    <dbReference type="NCBI Taxonomy" id="204285"/>
    <lineage>
        <taxon>Eukaryota</taxon>
        <taxon>Fungi</taxon>
        <taxon>Dikarya</taxon>
        <taxon>Ascomycota</taxon>
        <taxon>Pezizomycotina</taxon>
        <taxon>Sordariomycetes</taxon>
        <taxon>Sordariomycetidae</taxon>
        <taxon>Sordariales</taxon>
        <taxon>Chaetomiaceae</taxon>
        <taxon>Melanocarpus</taxon>
    </lineage>
</organism>
<keyword id="KW-0002">3D-structure</keyword>
<keyword id="KW-0186">Copper</keyword>
<keyword id="KW-0903">Direct protein sequencing</keyword>
<keyword id="KW-1015">Disulfide bond</keyword>
<keyword id="KW-0325">Glycoprotein</keyword>
<keyword id="KW-0439">Lignin degradation</keyword>
<keyword id="KW-0479">Metal-binding</keyword>
<keyword id="KW-0560">Oxidoreductase</keyword>
<keyword id="KW-0732">Signal</keyword>
<protein>
    <recommendedName>
        <fullName>Laccase-1</fullName>
        <ecNumber evidence="2">1.10.3.2</ecNumber>
    </recommendedName>
    <alternativeName>
        <fullName>Benzenediol:oxygen oxidoreductase 1</fullName>
    </alternativeName>
    <alternativeName>
        <fullName>Diphenol oxidase 1</fullName>
    </alternativeName>
    <alternativeName>
        <fullName>Ligninolytic phenoloxidase</fullName>
    </alternativeName>
    <alternativeName>
        <fullName>Urishiol oxidase 1</fullName>
    </alternativeName>
</protein>
<accession>Q70KY3</accession>
<accession>Q7SIE6</accession>
<name>LAC1_MELAO</name>
<dbReference type="EC" id="1.10.3.2" evidence="2"/>
<dbReference type="EMBL" id="AJ571698">
    <property type="protein sequence ID" value="CAE00180.1"/>
    <property type="molecule type" value="Genomic_DNA"/>
</dbReference>
<dbReference type="PDB" id="1GW0">
    <property type="method" value="X-ray"/>
    <property type="resolution" value="2.40 A"/>
    <property type="chains" value="A/B=51-609"/>
</dbReference>
<dbReference type="PDB" id="2IH8">
    <property type="method" value="X-ray"/>
    <property type="resolution" value="2.00 A"/>
    <property type="chains" value="A/B=51-609"/>
</dbReference>
<dbReference type="PDB" id="2IH9">
    <property type="method" value="X-ray"/>
    <property type="resolution" value="2.00 A"/>
    <property type="chains" value="A/B=51-609"/>
</dbReference>
<dbReference type="PDB" id="2Q9O">
    <property type="method" value="X-ray"/>
    <property type="resolution" value="1.30 A"/>
    <property type="chains" value="A/B=51-609"/>
</dbReference>
<dbReference type="PDB" id="3DKH">
    <property type="method" value="X-ray"/>
    <property type="resolution" value="2.40 A"/>
    <property type="chains" value="A/B=51-609"/>
</dbReference>
<dbReference type="PDB" id="3FU7">
    <property type="method" value="X-ray"/>
    <property type="resolution" value="1.67 A"/>
    <property type="chains" value="A/B=51-609"/>
</dbReference>
<dbReference type="PDB" id="3FU8">
    <property type="method" value="X-ray"/>
    <property type="resolution" value="1.80 A"/>
    <property type="chains" value="A/B=51-609"/>
</dbReference>
<dbReference type="PDB" id="3FU9">
    <property type="method" value="X-ray"/>
    <property type="resolution" value="2.00 A"/>
    <property type="chains" value="A/B=51-609"/>
</dbReference>
<dbReference type="PDB" id="3QPK">
    <property type="method" value="X-ray"/>
    <property type="resolution" value="1.90 A"/>
    <property type="chains" value="A/B=51-609"/>
</dbReference>
<dbReference type="PDBsum" id="1GW0"/>
<dbReference type="PDBsum" id="2IH8"/>
<dbReference type="PDBsum" id="2IH9"/>
<dbReference type="PDBsum" id="2Q9O"/>
<dbReference type="PDBsum" id="3DKH"/>
<dbReference type="PDBsum" id="3FU7"/>
<dbReference type="PDBsum" id="3FU8"/>
<dbReference type="PDBsum" id="3FU9"/>
<dbReference type="PDBsum" id="3QPK"/>
<dbReference type="SMR" id="Q70KY3"/>
<dbReference type="CAZy" id="AA1">
    <property type="family name" value="Auxiliary Activities 1"/>
</dbReference>
<dbReference type="GlyCosmos" id="Q70KY3">
    <property type="glycosylation" value="8 sites, No reported glycans"/>
</dbReference>
<dbReference type="iPTMnet" id="Q70KY3"/>
<dbReference type="BRENDA" id="1.10.3.2">
    <property type="organism ID" value="3208"/>
</dbReference>
<dbReference type="EvolutionaryTrace" id="Q70KY3"/>
<dbReference type="GO" id="GO:0043245">
    <property type="term" value="C:extraorganismal space"/>
    <property type="evidence" value="ECO:0000314"/>
    <property type="project" value="UniProtKB"/>
</dbReference>
<dbReference type="GO" id="GO:0005507">
    <property type="term" value="F:copper ion binding"/>
    <property type="evidence" value="ECO:0000314"/>
    <property type="project" value="UniProtKB"/>
</dbReference>
<dbReference type="GO" id="GO:0052716">
    <property type="term" value="F:hydroquinone:oxygen oxidoreductase activity"/>
    <property type="evidence" value="ECO:0000314"/>
    <property type="project" value="UniProtKB"/>
</dbReference>
<dbReference type="GO" id="GO:0030245">
    <property type="term" value="P:cellulose catabolic process"/>
    <property type="evidence" value="ECO:0000304"/>
    <property type="project" value="UniProtKB"/>
</dbReference>
<dbReference type="GO" id="GO:0046274">
    <property type="term" value="P:lignin catabolic process"/>
    <property type="evidence" value="ECO:0007669"/>
    <property type="project" value="UniProtKB-KW"/>
</dbReference>
<dbReference type="CDD" id="cd13854">
    <property type="entry name" value="CuRO_1_MaLCC_like"/>
    <property type="match status" value="1"/>
</dbReference>
<dbReference type="CDD" id="cd13880">
    <property type="entry name" value="CuRO_2_MaLCC_like"/>
    <property type="match status" value="1"/>
</dbReference>
<dbReference type="CDD" id="cd13901">
    <property type="entry name" value="CuRO_3_MaLCC_like"/>
    <property type="match status" value="1"/>
</dbReference>
<dbReference type="FunFam" id="2.60.40.420:FF:000021">
    <property type="entry name" value="Extracellular dihydrogeodin oxidase/laccase"/>
    <property type="match status" value="1"/>
</dbReference>
<dbReference type="FunFam" id="2.60.40.420:FF:000078">
    <property type="entry name" value="Laccase-1"/>
    <property type="match status" value="1"/>
</dbReference>
<dbReference type="FunFam" id="2.60.40.420:FF:000046">
    <property type="entry name" value="Multicopper oxidase"/>
    <property type="match status" value="1"/>
</dbReference>
<dbReference type="Gene3D" id="2.60.40.420">
    <property type="entry name" value="Cupredoxins - blue copper proteins"/>
    <property type="match status" value="3"/>
</dbReference>
<dbReference type="InterPro" id="IPR011707">
    <property type="entry name" value="Cu-oxidase-like_N"/>
</dbReference>
<dbReference type="InterPro" id="IPR001117">
    <property type="entry name" value="Cu-oxidase_2nd"/>
</dbReference>
<dbReference type="InterPro" id="IPR011706">
    <property type="entry name" value="Cu-oxidase_C"/>
</dbReference>
<dbReference type="InterPro" id="IPR045087">
    <property type="entry name" value="Cu-oxidase_fam"/>
</dbReference>
<dbReference type="InterPro" id="IPR033138">
    <property type="entry name" value="Cu_oxidase_CS"/>
</dbReference>
<dbReference type="InterPro" id="IPR002355">
    <property type="entry name" value="Cu_oxidase_Cu_BS"/>
</dbReference>
<dbReference type="InterPro" id="IPR008972">
    <property type="entry name" value="Cupredoxin"/>
</dbReference>
<dbReference type="PANTHER" id="PTHR11709:SF87">
    <property type="entry name" value="LACCASE"/>
    <property type="match status" value="1"/>
</dbReference>
<dbReference type="PANTHER" id="PTHR11709">
    <property type="entry name" value="MULTI-COPPER OXIDASE"/>
    <property type="match status" value="1"/>
</dbReference>
<dbReference type="Pfam" id="PF00394">
    <property type="entry name" value="Cu-oxidase"/>
    <property type="match status" value="1"/>
</dbReference>
<dbReference type="Pfam" id="PF07731">
    <property type="entry name" value="Cu-oxidase_2"/>
    <property type="match status" value="1"/>
</dbReference>
<dbReference type="Pfam" id="PF07732">
    <property type="entry name" value="Cu-oxidase_3"/>
    <property type="match status" value="1"/>
</dbReference>
<dbReference type="SUPFAM" id="SSF49503">
    <property type="entry name" value="Cupredoxins"/>
    <property type="match status" value="3"/>
</dbReference>
<dbReference type="PROSITE" id="PS00079">
    <property type="entry name" value="MULTICOPPER_OXIDASE1"/>
    <property type="match status" value="1"/>
</dbReference>
<dbReference type="PROSITE" id="PS00080">
    <property type="entry name" value="MULTICOPPER_OXIDASE2"/>
    <property type="match status" value="1"/>
</dbReference>
<sequence>MKTFTSALALVVGMLAPGAVVAAPPSTPAQRDLVELREARQEGGKDLRPREPTCNTPSNRACWSDGFDINTDYEVSTPDTGVTQSYVFNLTEVDNWMGPDGVVKEKVMLINGNIMGPNIVANWGDTVEVTVINNLVTNGTSIHWHGIHQKDTNLHDGANGVTECPIPPKGGQRTYRWRARQYGTSWYHSHFSAQYGNGVVGTIQINGPASLPYDIDLGVFPITDYYYRAADDLVHFTQNNAPPFSDNVLINGTAVNPNTGEGQYANVTLTPGKRHRLRILNTSTENHFQVSLVNHTMTVIAADMVPVNAMTVDSLFLAVGQRYDVVIDASRAPDNYWFNVTFGGQAACGGSLNPHPAAIFHYAGAPGGLPTDEGTPPVDHQCLDTLDVRPVVPRSVPVNSFVKRPDNTLPVALDLTGTPLFVWKVNGSDINVDWGKPIIDYILTGNTSYPVSDNIVQVDAVDQWTYWLIENDPEGPFSLPHPMHLHGHDFLVLGRSPDVPAASQQRFVFDPAVDLARLNGDNPPRRDTTMLPAGGWLLLAFRTDNPGAWLFHCHIAWHVSGGLSVDFLERPADLRQRISQEDEDDFNRVCDEWRAYWPTNPYPKIDSGLKRRRWVEESEWLVR</sequence>
<proteinExistence type="evidence at protein level"/>
<evidence type="ECO:0000255" key="1"/>
<evidence type="ECO:0000269" key="2">
    <source>
    </source>
</evidence>
<evidence type="ECO:0000269" key="3">
    <source>
    </source>
</evidence>
<evidence type="ECO:0000269" key="4">
    <source>
    </source>
</evidence>
<evidence type="ECO:0000305" key="5"/>
<evidence type="ECO:0000312" key="6">
    <source>
        <dbReference type="EMBL" id="CAE00180.1"/>
    </source>
</evidence>
<evidence type="ECO:0007829" key="7">
    <source>
        <dbReference type="PDB" id="2Q9O"/>
    </source>
</evidence>
<evidence type="ECO:0007829" key="8">
    <source>
        <dbReference type="PDB" id="3DKH"/>
    </source>
</evidence>
<evidence type="ECO:0007829" key="9">
    <source>
        <dbReference type="PDB" id="3FU9"/>
    </source>
</evidence>
<feature type="signal peptide" evidence="1">
    <location>
        <begin position="1"/>
        <end position="22"/>
    </location>
</feature>
<feature type="propeptide" id="PRO_0000235826" evidence="1 2">
    <location>
        <begin position="23"/>
        <end position="50"/>
    </location>
</feature>
<feature type="chain" id="PRO_0000235827" description="Laccase-1" evidence="3">
    <location>
        <begin position="51"/>
        <end position="609"/>
    </location>
</feature>
<feature type="propeptide" id="PRO_0000235828" evidence="3">
    <location>
        <begin position="610"/>
        <end position="623"/>
    </location>
</feature>
<feature type="binding site" description="type 2 copper site" evidence="3">
    <location>
        <position position="143"/>
    </location>
    <ligand>
        <name>Cu cation</name>
        <dbReference type="ChEBI" id="CHEBI:23378"/>
        <label>1</label>
    </ligand>
</feature>
<feature type="binding site" description="type 3 copper site" evidence="3">
    <location>
        <position position="145"/>
    </location>
    <ligand>
        <name>Cu cation</name>
        <dbReference type="ChEBI" id="CHEBI:23378"/>
        <label>2</label>
    </ligand>
</feature>
<feature type="binding site" description="type 3 copper site" evidence="3">
    <location>
        <position position="188"/>
    </location>
    <ligand>
        <name>Cu cation</name>
        <dbReference type="ChEBI" id="CHEBI:23378"/>
        <label>2</label>
    </ligand>
</feature>
<feature type="binding site" description="type 3 copper site" evidence="3">
    <location>
        <position position="190"/>
    </location>
    <ligand>
        <name>Cu cation</name>
        <dbReference type="ChEBI" id="CHEBI:23378"/>
        <label>3</label>
    </ligand>
</feature>
<feature type="binding site" description="type 1 copper site" evidence="3">
    <location>
        <position position="481"/>
    </location>
    <ligand>
        <name>Cu cation</name>
        <dbReference type="ChEBI" id="CHEBI:23378"/>
        <label>4</label>
    </ligand>
</feature>
<feature type="binding site" description="type 2 copper site" evidence="3">
    <location>
        <position position="484"/>
    </location>
    <ligand>
        <name>Cu cation</name>
        <dbReference type="ChEBI" id="CHEBI:23378"/>
        <label>1</label>
    </ligand>
</feature>
<feature type="binding site" description="type 3 copper site" evidence="3">
    <location>
        <position position="486"/>
    </location>
    <ligand>
        <name>Cu cation</name>
        <dbReference type="ChEBI" id="CHEBI:23378"/>
        <label>3</label>
    </ligand>
</feature>
<feature type="binding site" description="type 3 copper site" evidence="3">
    <location>
        <position position="552"/>
    </location>
    <ligand>
        <name>Cu cation</name>
        <dbReference type="ChEBI" id="CHEBI:23378"/>
        <label>3</label>
    </ligand>
</feature>
<feature type="binding site" description="type 1 copper site" evidence="3">
    <location>
        <position position="553"/>
    </location>
    <ligand>
        <name>Cu cation</name>
        <dbReference type="ChEBI" id="CHEBI:23378"/>
        <label>4</label>
    </ligand>
</feature>
<feature type="binding site" description="type 3 copper site" evidence="3">
    <location>
        <position position="554"/>
    </location>
    <ligand>
        <name>Cu cation</name>
        <dbReference type="ChEBI" id="CHEBI:23378"/>
        <label>2</label>
    </ligand>
</feature>
<feature type="binding site" description="type 1 copper site" evidence="3">
    <location>
        <position position="558"/>
    </location>
    <ligand>
        <name>Cu cation</name>
        <dbReference type="ChEBI" id="CHEBI:23378"/>
        <label>4</label>
    </ligand>
</feature>
<feature type="glycosylation site" description="N-linked (GlcNAc...) asparagine" evidence="3">
    <location>
        <position position="89"/>
    </location>
</feature>
<feature type="glycosylation site" description="N-linked (GlcNAc...) asparagine" evidence="3">
    <location>
        <position position="138"/>
    </location>
</feature>
<feature type="glycosylation site" description="N-linked (GlcNAc...) asparagine" evidence="3">
    <location>
        <position position="251"/>
    </location>
</feature>
<feature type="glycosylation site" description="N-linked (GlcNAc...) asparagine" evidence="3">
    <location>
        <position position="266"/>
    </location>
</feature>
<feature type="glycosylation site" description="N-linked (GlcNAc...) asparagine" evidence="3">
    <location>
        <position position="294"/>
    </location>
</feature>
<feature type="glycosylation site" description="N-linked (GlcNAc...) asparagine" evidence="3">
    <location>
        <position position="339"/>
    </location>
</feature>
<feature type="glycosylation site" description="N-linked (GlcNAc...) asparagine" evidence="3">
    <location>
        <position position="426"/>
    </location>
</feature>
<feature type="glycosylation site" description="N-linked (GlcNAc...) asparagine" evidence="3">
    <location>
        <position position="446"/>
    </location>
</feature>
<feature type="disulfide bond" evidence="3">
    <location>
        <begin position="54"/>
        <end position="62"/>
    </location>
</feature>
<feature type="disulfide bond" evidence="3">
    <location>
        <begin position="164"/>
        <end position="590"/>
    </location>
</feature>
<feature type="disulfide bond" evidence="3">
    <location>
        <begin position="348"/>
        <end position="382"/>
    </location>
</feature>
<feature type="strand" evidence="7">
    <location>
        <begin position="61"/>
        <end position="64"/>
    </location>
</feature>
<feature type="turn" evidence="7">
    <location>
        <begin position="73"/>
        <end position="75"/>
    </location>
</feature>
<feature type="strand" evidence="7">
    <location>
        <begin position="83"/>
        <end position="97"/>
    </location>
</feature>
<feature type="strand" evidence="7">
    <location>
        <begin position="103"/>
        <end position="110"/>
    </location>
</feature>
<feature type="strand" evidence="7">
    <location>
        <begin position="113"/>
        <end position="115"/>
    </location>
</feature>
<feature type="strand" evidence="7">
    <location>
        <begin position="119"/>
        <end position="122"/>
    </location>
</feature>
<feature type="strand" evidence="7">
    <location>
        <begin position="126"/>
        <end position="134"/>
    </location>
</feature>
<feature type="strand" evidence="7">
    <location>
        <begin position="142"/>
        <end position="145"/>
    </location>
</feature>
<feature type="helix" evidence="7">
    <location>
        <begin position="153"/>
        <end position="155"/>
    </location>
</feature>
<feature type="turn" evidence="7">
    <location>
        <begin position="159"/>
        <end position="161"/>
    </location>
</feature>
<feature type="turn" evidence="7">
    <location>
        <begin position="168"/>
        <end position="170"/>
    </location>
</feature>
<feature type="strand" evidence="7">
    <location>
        <begin position="171"/>
        <end position="178"/>
    </location>
</feature>
<feature type="strand" evidence="7">
    <location>
        <begin position="183"/>
        <end position="189"/>
    </location>
</feature>
<feature type="helix" evidence="7">
    <location>
        <begin position="194"/>
        <end position="197"/>
    </location>
</feature>
<feature type="strand" evidence="7">
    <location>
        <begin position="200"/>
        <end position="206"/>
    </location>
</feature>
<feature type="strand" evidence="7">
    <location>
        <begin position="214"/>
        <end position="225"/>
    </location>
</feature>
<feature type="helix" evidence="7">
    <location>
        <begin position="230"/>
        <end position="237"/>
    </location>
</feature>
<feature type="strand" evidence="7">
    <location>
        <begin position="245"/>
        <end position="250"/>
    </location>
</feature>
<feature type="turn" evidence="7">
    <location>
        <begin position="257"/>
        <end position="259"/>
    </location>
</feature>
<feature type="strand" evidence="7">
    <location>
        <begin position="266"/>
        <end position="269"/>
    </location>
</feature>
<feature type="strand" evidence="7">
    <location>
        <begin position="274"/>
        <end position="281"/>
    </location>
</feature>
<feature type="strand" evidence="7">
    <location>
        <begin position="288"/>
        <end position="292"/>
    </location>
</feature>
<feature type="strand" evidence="7">
    <location>
        <begin position="297"/>
        <end position="302"/>
    </location>
</feature>
<feature type="strand" evidence="7">
    <location>
        <begin position="305"/>
        <end position="313"/>
    </location>
</feature>
<feature type="strand" evidence="7">
    <location>
        <begin position="315"/>
        <end position="317"/>
    </location>
</feature>
<feature type="strand" evidence="7">
    <location>
        <begin position="322"/>
        <end position="328"/>
    </location>
</feature>
<feature type="strand" evidence="7">
    <location>
        <begin position="333"/>
        <end position="341"/>
    </location>
</feature>
<feature type="helix" evidence="7">
    <location>
        <begin position="344"/>
        <end position="346"/>
    </location>
</feature>
<feature type="strand" evidence="7">
    <location>
        <begin position="351"/>
        <end position="354"/>
    </location>
</feature>
<feature type="strand" evidence="7">
    <location>
        <begin position="357"/>
        <end position="362"/>
    </location>
</feature>
<feature type="strand" evidence="7">
    <location>
        <begin position="390"/>
        <end position="392"/>
    </location>
</feature>
<feature type="strand" evidence="9">
    <location>
        <begin position="398"/>
        <end position="400"/>
    </location>
</feature>
<feature type="helix" evidence="7">
    <location>
        <begin position="405"/>
        <end position="407"/>
    </location>
</feature>
<feature type="strand" evidence="7">
    <location>
        <begin position="408"/>
        <end position="414"/>
    </location>
</feature>
<feature type="strand" evidence="7">
    <location>
        <begin position="416"/>
        <end position="420"/>
    </location>
</feature>
<feature type="strand" evidence="7">
    <location>
        <begin position="422"/>
        <end position="425"/>
    </location>
</feature>
<feature type="strand" evidence="8">
    <location>
        <begin position="434"/>
        <end position="436"/>
    </location>
</feature>
<feature type="helix" evidence="7">
    <location>
        <begin position="438"/>
        <end position="444"/>
    </location>
</feature>
<feature type="helix" evidence="7">
    <location>
        <begin position="451"/>
        <end position="453"/>
    </location>
</feature>
<feature type="strand" evidence="7">
    <location>
        <begin position="455"/>
        <end position="458"/>
    </location>
</feature>
<feature type="strand" evidence="7">
    <location>
        <begin position="464"/>
        <end position="471"/>
    </location>
</feature>
<feature type="strand" evidence="7">
    <location>
        <begin position="481"/>
        <end position="488"/>
    </location>
</feature>
<feature type="strand" evidence="7">
    <location>
        <begin position="490"/>
        <end position="496"/>
    </location>
</feature>
<feature type="helix" evidence="7">
    <location>
        <begin position="511"/>
        <end position="514"/>
    </location>
</feature>
<feature type="helix" evidence="7">
    <location>
        <begin position="515"/>
        <end position="517"/>
    </location>
</feature>
<feature type="strand" evidence="7">
    <location>
        <begin position="525"/>
        <end position="531"/>
    </location>
</feature>
<feature type="strand" evidence="7">
    <location>
        <begin position="535"/>
        <end position="542"/>
    </location>
</feature>
<feature type="strand" evidence="7">
    <location>
        <begin position="547"/>
        <end position="553"/>
    </location>
</feature>
<feature type="helix" evidence="7">
    <location>
        <begin position="556"/>
        <end position="560"/>
    </location>
</feature>
<feature type="strand" evidence="7">
    <location>
        <begin position="564"/>
        <end position="569"/>
    </location>
</feature>
<feature type="helix" evidence="7">
    <location>
        <begin position="571"/>
        <end position="574"/>
    </location>
</feature>
<feature type="helix" evidence="7">
    <location>
        <begin position="575"/>
        <end position="577"/>
    </location>
</feature>
<feature type="helix" evidence="7">
    <location>
        <begin position="580"/>
        <end position="596"/>
    </location>
</feature>
<feature type="helix" evidence="7">
    <location>
        <begin position="597"/>
        <end position="599"/>
    </location>
</feature>